<proteinExistence type="inferred from homology"/>
<name>PGK_ACAM1</name>
<comment type="catalytic activity">
    <reaction evidence="1">
        <text>(2R)-3-phosphoglycerate + ATP = (2R)-3-phospho-glyceroyl phosphate + ADP</text>
        <dbReference type="Rhea" id="RHEA:14801"/>
        <dbReference type="ChEBI" id="CHEBI:30616"/>
        <dbReference type="ChEBI" id="CHEBI:57604"/>
        <dbReference type="ChEBI" id="CHEBI:58272"/>
        <dbReference type="ChEBI" id="CHEBI:456216"/>
        <dbReference type="EC" id="2.7.2.3"/>
    </reaction>
</comment>
<comment type="pathway">
    <text evidence="1">Carbohydrate degradation; glycolysis; pyruvate from D-glyceraldehyde 3-phosphate: step 2/5.</text>
</comment>
<comment type="subunit">
    <text evidence="1">Monomer.</text>
</comment>
<comment type="subcellular location">
    <subcellularLocation>
        <location evidence="1">Cytoplasm</location>
    </subcellularLocation>
</comment>
<comment type="similarity">
    <text evidence="1">Belongs to the phosphoglycerate kinase family.</text>
</comment>
<feature type="chain" id="PRO_1000076577" description="Phosphoglycerate kinase">
    <location>
        <begin position="1"/>
        <end position="401"/>
    </location>
</feature>
<feature type="binding site" evidence="1">
    <location>
        <begin position="24"/>
        <end position="26"/>
    </location>
    <ligand>
        <name>substrate</name>
    </ligand>
</feature>
<feature type="binding site" evidence="1">
    <location>
        <position position="40"/>
    </location>
    <ligand>
        <name>substrate</name>
    </ligand>
</feature>
<feature type="binding site" evidence="1">
    <location>
        <begin position="63"/>
        <end position="66"/>
    </location>
    <ligand>
        <name>substrate</name>
    </ligand>
</feature>
<feature type="binding site" evidence="1">
    <location>
        <position position="122"/>
    </location>
    <ligand>
        <name>substrate</name>
    </ligand>
</feature>
<feature type="binding site" evidence="1">
    <location>
        <position position="155"/>
    </location>
    <ligand>
        <name>substrate</name>
    </ligand>
</feature>
<feature type="binding site" evidence="1">
    <location>
        <position position="206"/>
    </location>
    <ligand>
        <name>ATP</name>
        <dbReference type="ChEBI" id="CHEBI:30616"/>
    </ligand>
</feature>
<feature type="binding site" evidence="1">
    <location>
        <position position="297"/>
    </location>
    <ligand>
        <name>ATP</name>
        <dbReference type="ChEBI" id="CHEBI:30616"/>
    </ligand>
</feature>
<feature type="binding site" evidence="1">
    <location>
        <position position="328"/>
    </location>
    <ligand>
        <name>ATP</name>
        <dbReference type="ChEBI" id="CHEBI:30616"/>
    </ligand>
</feature>
<feature type="binding site" evidence="1">
    <location>
        <begin position="357"/>
        <end position="360"/>
    </location>
    <ligand>
        <name>ATP</name>
        <dbReference type="ChEBI" id="CHEBI:30616"/>
    </ligand>
</feature>
<sequence length="401" mass="41862">MSKKTIANLTSADLSGKRVLVRADFNVPLDGDGKITDDTRIRAALPTIQDLTSKGAKVILASHFGRPKGQVNESMRLTPVAARLSELLGQAVTKCDDCIGDEVAAKVGALQNGQVALLENVRFHSGEEANDPEFARQLASVADLYVNDAFGTAHRAHASTEGVTHHLSPSVAGYLIEKELKYLQAAIEGPQRPLAAIVGGSKVSSKIGVIETLLDKVDKLLIGGGMIFTFYKARGLAVGKSLVEEDKLDLARTLEAKAKEKGVALLLPSDVVVADNFAADANAQTVSINNIPDGWMGLDIGPNSVKEFQAALSDCKTVIWNGPMGVFEFDKFAAGTDAVAHSLAAITETGADTIIGGGDSVAAVEKVGVAEKMSHISTGGGASLELLEGKVLPGIAALDEA</sequence>
<dbReference type="EC" id="2.7.2.3" evidence="1"/>
<dbReference type="EMBL" id="CP000828">
    <property type="protein sequence ID" value="ABW25686.1"/>
    <property type="molecule type" value="Genomic_DNA"/>
</dbReference>
<dbReference type="RefSeq" id="WP_012161281.1">
    <property type="nucleotide sequence ID" value="NC_009925.1"/>
</dbReference>
<dbReference type="SMR" id="B0CD95"/>
<dbReference type="STRING" id="329726.AM1_0637"/>
<dbReference type="KEGG" id="amr:AM1_0637"/>
<dbReference type="eggNOG" id="COG0126">
    <property type="taxonomic scope" value="Bacteria"/>
</dbReference>
<dbReference type="HOGENOM" id="CLU_025427_0_2_3"/>
<dbReference type="OrthoDB" id="9808460at2"/>
<dbReference type="UniPathway" id="UPA00109">
    <property type="reaction ID" value="UER00185"/>
</dbReference>
<dbReference type="Proteomes" id="UP000000268">
    <property type="component" value="Chromosome"/>
</dbReference>
<dbReference type="GO" id="GO:0005829">
    <property type="term" value="C:cytosol"/>
    <property type="evidence" value="ECO:0007669"/>
    <property type="project" value="TreeGrafter"/>
</dbReference>
<dbReference type="GO" id="GO:0043531">
    <property type="term" value="F:ADP binding"/>
    <property type="evidence" value="ECO:0007669"/>
    <property type="project" value="TreeGrafter"/>
</dbReference>
<dbReference type="GO" id="GO:0005524">
    <property type="term" value="F:ATP binding"/>
    <property type="evidence" value="ECO:0007669"/>
    <property type="project" value="UniProtKB-KW"/>
</dbReference>
<dbReference type="GO" id="GO:0004618">
    <property type="term" value="F:phosphoglycerate kinase activity"/>
    <property type="evidence" value="ECO:0007669"/>
    <property type="project" value="UniProtKB-UniRule"/>
</dbReference>
<dbReference type="GO" id="GO:0006094">
    <property type="term" value="P:gluconeogenesis"/>
    <property type="evidence" value="ECO:0007669"/>
    <property type="project" value="TreeGrafter"/>
</dbReference>
<dbReference type="GO" id="GO:0006096">
    <property type="term" value="P:glycolytic process"/>
    <property type="evidence" value="ECO:0007669"/>
    <property type="project" value="UniProtKB-UniRule"/>
</dbReference>
<dbReference type="CDD" id="cd00318">
    <property type="entry name" value="Phosphoglycerate_kinase"/>
    <property type="match status" value="1"/>
</dbReference>
<dbReference type="FunFam" id="3.40.50.1260:FF:000003">
    <property type="entry name" value="Phosphoglycerate kinase"/>
    <property type="match status" value="1"/>
</dbReference>
<dbReference type="FunFam" id="3.40.50.1260:FF:000006">
    <property type="entry name" value="Phosphoglycerate kinase"/>
    <property type="match status" value="1"/>
</dbReference>
<dbReference type="Gene3D" id="3.40.50.1260">
    <property type="entry name" value="Phosphoglycerate kinase, N-terminal domain"/>
    <property type="match status" value="2"/>
</dbReference>
<dbReference type="HAMAP" id="MF_00145">
    <property type="entry name" value="Phosphoglyc_kinase"/>
    <property type="match status" value="1"/>
</dbReference>
<dbReference type="InterPro" id="IPR001576">
    <property type="entry name" value="Phosphoglycerate_kinase"/>
</dbReference>
<dbReference type="InterPro" id="IPR015911">
    <property type="entry name" value="Phosphoglycerate_kinase_CS"/>
</dbReference>
<dbReference type="InterPro" id="IPR015824">
    <property type="entry name" value="Phosphoglycerate_kinase_N"/>
</dbReference>
<dbReference type="InterPro" id="IPR036043">
    <property type="entry name" value="Phosphoglycerate_kinase_sf"/>
</dbReference>
<dbReference type="PANTHER" id="PTHR11406">
    <property type="entry name" value="PHOSPHOGLYCERATE KINASE"/>
    <property type="match status" value="1"/>
</dbReference>
<dbReference type="PANTHER" id="PTHR11406:SF23">
    <property type="entry name" value="PHOSPHOGLYCERATE KINASE 1, CHLOROPLASTIC-RELATED"/>
    <property type="match status" value="1"/>
</dbReference>
<dbReference type="Pfam" id="PF00162">
    <property type="entry name" value="PGK"/>
    <property type="match status" value="1"/>
</dbReference>
<dbReference type="PIRSF" id="PIRSF000724">
    <property type="entry name" value="Pgk"/>
    <property type="match status" value="1"/>
</dbReference>
<dbReference type="PRINTS" id="PR00477">
    <property type="entry name" value="PHGLYCKINASE"/>
</dbReference>
<dbReference type="SUPFAM" id="SSF53748">
    <property type="entry name" value="Phosphoglycerate kinase"/>
    <property type="match status" value="1"/>
</dbReference>
<dbReference type="PROSITE" id="PS00111">
    <property type="entry name" value="PGLYCERATE_KINASE"/>
    <property type="match status" value="1"/>
</dbReference>
<protein>
    <recommendedName>
        <fullName evidence="1">Phosphoglycerate kinase</fullName>
        <ecNumber evidence="1">2.7.2.3</ecNumber>
    </recommendedName>
</protein>
<gene>
    <name evidence="1" type="primary">pgk</name>
    <name type="ordered locus">AM1_0637</name>
</gene>
<keyword id="KW-0067">ATP-binding</keyword>
<keyword id="KW-0963">Cytoplasm</keyword>
<keyword id="KW-0324">Glycolysis</keyword>
<keyword id="KW-0418">Kinase</keyword>
<keyword id="KW-0547">Nucleotide-binding</keyword>
<keyword id="KW-1185">Reference proteome</keyword>
<keyword id="KW-0808">Transferase</keyword>
<organism>
    <name type="scientific">Acaryochloris marina (strain MBIC 11017)</name>
    <dbReference type="NCBI Taxonomy" id="329726"/>
    <lineage>
        <taxon>Bacteria</taxon>
        <taxon>Bacillati</taxon>
        <taxon>Cyanobacteriota</taxon>
        <taxon>Cyanophyceae</taxon>
        <taxon>Acaryochloridales</taxon>
        <taxon>Acaryochloridaceae</taxon>
        <taxon>Acaryochloris</taxon>
    </lineage>
</organism>
<evidence type="ECO:0000255" key="1">
    <source>
        <dbReference type="HAMAP-Rule" id="MF_00145"/>
    </source>
</evidence>
<accession>B0CD95</accession>
<reference key="1">
    <citation type="journal article" date="2008" name="Proc. Natl. Acad. Sci. U.S.A.">
        <title>Niche adaptation and genome expansion in the chlorophyll d-producing cyanobacterium Acaryochloris marina.</title>
        <authorList>
            <person name="Swingley W.D."/>
            <person name="Chen M."/>
            <person name="Cheung P.C."/>
            <person name="Conrad A.L."/>
            <person name="Dejesa L.C."/>
            <person name="Hao J."/>
            <person name="Honchak B.M."/>
            <person name="Karbach L.E."/>
            <person name="Kurdoglu A."/>
            <person name="Lahiri S."/>
            <person name="Mastrian S.D."/>
            <person name="Miyashita H."/>
            <person name="Page L."/>
            <person name="Ramakrishna P."/>
            <person name="Satoh S."/>
            <person name="Sattley W.M."/>
            <person name="Shimada Y."/>
            <person name="Taylor H.L."/>
            <person name="Tomo T."/>
            <person name="Tsuchiya T."/>
            <person name="Wang Z.T."/>
            <person name="Raymond J."/>
            <person name="Mimuro M."/>
            <person name="Blankenship R.E."/>
            <person name="Touchman J.W."/>
        </authorList>
    </citation>
    <scope>NUCLEOTIDE SEQUENCE [LARGE SCALE GENOMIC DNA]</scope>
    <source>
        <strain>MBIC 11017</strain>
    </source>
</reference>